<gene>
    <name evidence="1" type="primary">glmM</name>
    <name type="ordered locus">PSEEN0789</name>
</gene>
<protein>
    <recommendedName>
        <fullName evidence="1">Phosphoglucosamine mutase</fullName>
        <ecNumber evidence="1">5.4.2.10</ecNumber>
    </recommendedName>
</protein>
<feature type="chain" id="PRO_0000301359" description="Phosphoglucosamine mutase">
    <location>
        <begin position="1"/>
        <end position="446"/>
    </location>
</feature>
<feature type="active site" description="Phosphoserine intermediate" evidence="1">
    <location>
        <position position="101"/>
    </location>
</feature>
<feature type="binding site" description="via phosphate group" evidence="1">
    <location>
        <position position="101"/>
    </location>
    <ligand>
        <name>Mg(2+)</name>
        <dbReference type="ChEBI" id="CHEBI:18420"/>
    </ligand>
</feature>
<feature type="binding site" evidence="1">
    <location>
        <position position="240"/>
    </location>
    <ligand>
        <name>Mg(2+)</name>
        <dbReference type="ChEBI" id="CHEBI:18420"/>
    </ligand>
</feature>
<feature type="binding site" evidence="1">
    <location>
        <position position="242"/>
    </location>
    <ligand>
        <name>Mg(2+)</name>
        <dbReference type="ChEBI" id="CHEBI:18420"/>
    </ligand>
</feature>
<feature type="binding site" evidence="1">
    <location>
        <position position="244"/>
    </location>
    <ligand>
        <name>Mg(2+)</name>
        <dbReference type="ChEBI" id="CHEBI:18420"/>
    </ligand>
</feature>
<feature type="modified residue" description="Phosphoserine" evidence="1">
    <location>
        <position position="101"/>
    </location>
</feature>
<evidence type="ECO:0000255" key="1">
    <source>
        <dbReference type="HAMAP-Rule" id="MF_01554"/>
    </source>
</evidence>
<name>GLMM_PSEE4</name>
<reference key="1">
    <citation type="journal article" date="2006" name="Nat. Biotechnol.">
        <title>Complete genome sequence of the entomopathogenic and metabolically versatile soil bacterium Pseudomonas entomophila.</title>
        <authorList>
            <person name="Vodovar N."/>
            <person name="Vallenet D."/>
            <person name="Cruveiller S."/>
            <person name="Rouy Z."/>
            <person name="Barbe V."/>
            <person name="Acosta C."/>
            <person name="Cattolico L."/>
            <person name="Jubin C."/>
            <person name="Lajus A."/>
            <person name="Segurens B."/>
            <person name="Vacherie B."/>
            <person name="Wincker P."/>
            <person name="Weissenbach J."/>
            <person name="Lemaitre B."/>
            <person name="Medigue C."/>
            <person name="Boccard F."/>
        </authorList>
    </citation>
    <scope>NUCLEOTIDE SEQUENCE [LARGE SCALE GENOMIC DNA]</scope>
    <source>
        <strain>L48</strain>
    </source>
</reference>
<organism>
    <name type="scientific">Pseudomonas entomophila (strain L48)</name>
    <dbReference type="NCBI Taxonomy" id="384676"/>
    <lineage>
        <taxon>Bacteria</taxon>
        <taxon>Pseudomonadati</taxon>
        <taxon>Pseudomonadota</taxon>
        <taxon>Gammaproteobacteria</taxon>
        <taxon>Pseudomonadales</taxon>
        <taxon>Pseudomonadaceae</taxon>
        <taxon>Pseudomonas</taxon>
    </lineage>
</organism>
<comment type="function">
    <text evidence="1">Catalyzes the conversion of glucosamine-6-phosphate to glucosamine-1-phosphate.</text>
</comment>
<comment type="catalytic activity">
    <reaction evidence="1">
        <text>alpha-D-glucosamine 1-phosphate = D-glucosamine 6-phosphate</text>
        <dbReference type="Rhea" id="RHEA:23424"/>
        <dbReference type="ChEBI" id="CHEBI:58516"/>
        <dbReference type="ChEBI" id="CHEBI:58725"/>
        <dbReference type="EC" id="5.4.2.10"/>
    </reaction>
</comment>
<comment type="cofactor">
    <cofactor evidence="1">
        <name>Mg(2+)</name>
        <dbReference type="ChEBI" id="CHEBI:18420"/>
    </cofactor>
    <text evidence="1">Binds 1 Mg(2+) ion per subunit.</text>
</comment>
<comment type="PTM">
    <text evidence="1">Activated by phosphorylation.</text>
</comment>
<comment type="similarity">
    <text evidence="1">Belongs to the phosphohexose mutase family.</text>
</comment>
<dbReference type="EC" id="5.4.2.10" evidence="1"/>
<dbReference type="EMBL" id="CT573326">
    <property type="protein sequence ID" value="CAK13706.1"/>
    <property type="molecule type" value="Genomic_DNA"/>
</dbReference>
<dbReference type="RefSeq" id="WP_011532136.1">
    <property type="nucleotide sequence ID" value="NC_008027.1"/>
</dbReference>
<dbReference type="SMR" id="Q1IF48"/>
<dbReference type="STRING" id="384676.PSEEN0789"/>
<dbReference type="GeneID" id="32804096"/>
<dbReference type="KEGG" id="pen:PSEEN0789"/>
<dbReference type="eggNOG" id="COG1109">
    <property type="taxonomic scope" value="Bacteria"/>
</dbReference>
<dbReference type="HOGENOM" id="CLU_016950_7_0_6"/>
<dbReference type="OrthoDB" id="9803322at2"/>
<dbReference type="Proteomes" id="UP000000658">
    <property type="component" value="Chromosome"/>
</dbReference>
<dbReference type="GO" id="GO:0005829">
    <property type="term" value="C:cytosol"/>
    <property type="evidence" value="ECO:0007669"/>
    <property type="project" value="TreeGrafter"/>
</dbReference>
<dbReference type="GO" id="GO:0000287">
    <property type="term" value="F:magnesium ion binding"/>
    <property type="evidence" value="ECO:0007669"/>
    <property type="project" value="UniProtKB-UniRule"/>
</dbReference>
<dbReference type="GO" id="GO:0008966">
    <property type="term" value="F:phosphoglucosamine mutase activity"/>
    <property type="evidence" value="ECO:0007669"/>
    <property type="project" value="UniProtKB-UniRule"/>
</dbReference>
<dbReference type="GO" id="GO:0004615">
    <property type="term" value="F:phosphomannomutase activity"/>
    <property type="evidence" value="ECO:0007669"/>
    <property type="project" value="TreeGrafter"/>
</dbReference>
<dbReference type="GO" id="GO:0005975">
    <property type="term" value="P:carbohydrate metabolic process"/>
    <property type="evidence" value="ECO:0007669"/>
    <property type="project" value="InterPro"/>
</dbReference>
<dbReference type="GO" id="GO:0009252">
    <property type="term" value="P:peptidoglycan biosynthetic process"/>
    <property type="evidence" value="ECO:0007669"/>
    <property type="project" value="TreeGrafter"/>
</dbReference>
<dbReference type="GO" id="GO:0006048">
    <property type="term" value="P:UDP-N-acetylglucosamine biosynthetic process"/>
    <property type="evidence" value="ECO:0007669"/>
    <property type="project" value="TreeGrafter"/>
</dbReference>
<dbReference type="CDD" id="cd05802">
    <property type="entry name" value="GlmM"/>
    <property type="match status" value="1"/>
</dbReference>
<dbReference type="FunFam" id="3.30.310.50:FF:000001">
    <property type="entry name" value="Phosphoglucosamine mutase"/>
    <property type="match status" value="1"/>
</dbReference>
<dbReference type="FunFam" id="3.40.120.10:FF:000001">
    <property type="entry name" value="Phosphoglucosamine mutase"/>
    <property type="match status" value="1"/>
</dbReference>
<dbReference type="FunFam" id="3.40.120.10:FF:000003">
    <property type="entry name" value="Phosphoglucosamine mutase"/>
    <property type="match status" value="1"/>
</dbReference>
<dbReference type="Gene3D" id="3.40.120.10">
    <property type="entry name" value="Alpha-D-Glucose-1,6-Bisphosphate, subunit A, domain 3"/>
    <property type="match status" value="3"/>
</dbReference>
<dbReference type="Gene3D" id="3.30.310.50">
    <property type="entry name" value="Alpha-D-phosphohexomutase, C-terminal domain"/>
    <property type="match status" value="1"/>
</dbReference>
<dbReference type="HAMAP" id="MF_01554_B">
    <property type="entry name" value="GlmM_B"/>
    <property type="match status" value="1"/>
</dbReference>
<dbReference type="InterPro" id="IPR005844">
    <property type="entry name" value="A-D-PHexomutase_a/b/a-I"/>
</dbReference>
<dbReference type="InterPro" id="IPR016055">
    <property type="entry name" value="A-D-PHexomutase_a/b/a-I/II/III"/>
</dbReference>
<dbReference type="InterPro" id="IPR005845">
    <property type="entry name" value="A-D-PHexomutase_a/b/a-II"/>
</dbReference>
<dbReference type="InterPro" id="IPR005846">
    <property type="entry name" value="A-D-PHexomutase_a/b/a-III"/>
</dbReference>
<dbReference type="InterPro" id="IPR005843">
    <property type="entry name" value="A-D-PHexomutase_C"/>
</dbReference>
<dbReference type="InterPro" id="IPR036900">
    <property type="entry name" value="A-D-PHexomutase_C_sf"/>
</dbReference>
<dbReference type="InterPro" id="IPR016066">
    <property type="entry name" value="A-D-PHexomutase_CS"/>
</dbReference>
<dbReference type="InterPro" id="IPR005841">
    <property type="entry name" value="Alpha-D-phosphohexomutase_SF"/>
</dbReference>
<dbReference type="InterPro" id="IPR006352">
    <property type="entry name" value="GlmM_bact"/>
</dbReference>
<dbReference type="InterPro" id="IPR050060">
    <property type="entry name" value="Phosphoglucosamine_mutase"/>
</dbReference>
<dbReference type="NCBIfam" id="TIGR01455">
    <property type="entry name" value="glmM"/>
    <property type="match status" value="1"/>
</dbReference>
<dbReference type="NCBIfam" id="NF008139">
    <property type="entry name" value="PRK10887.1"/>
    <property type="match status" value="1"/>
</dbReference>
<dbReference type="PANTHER" id="PTHR42946:SF1">
    <property type="entry name" value="PHOSPHOGLUCOMUTASE (ALPHA-D-GLUCOSE-1,6-BISPHOSPHATE-DEPENDENT)"/>
    <property type="match status" value="1"/>
</dbReference>
<dbReference type="PANTHER" id="PTHR42946">
    <property type="entry name" value="PHOSPHOHEXOSE MUTASE"/>
    <property type="match status" value="1"/>
</dbReference>
<dbReference type="Pfam" id="PF02878">
    <property type="entry name" value="PGM_PMM_I"/>
    <property type="match status" value="1"/>
</dbReference>
<dbReference type="Pfam" id="PF02879">
    <property type="entry name" value="PGM_PMM_II"/>
    <property type="match status" value="1"/>
</dbReference>
<dbReference type="Pfam" id="PF02880">
    <property type="entry name" value="PGM_PMM_III"/>
    <property type="match status" value="1"/>
</dbReference>
<dbReference type="Pfam" id="PF00408">
    <property type="entry name" value="PGM_PMM_IV"/>
    <property type="match status" value="1"/>
</dbReference>
<dbReference type="PRINTS" id="PR00509">
    <property type="entry name" value="PGMPMM"/>
</dbReference>
<dbReference type="SUPFAM" id="SSF55957">
    <property type="entry name" value="Phosphoglucomutase, C-terminal domain"/>
    <property type="match status" value="1"/>
</dbReference>
<dbReference type="SUPFAM" id="SSF53738">
    <property type="entry name" value="Phosphoglucomutase, first 3 domains"/>
    <property type="match status" value="3"/>
</dbReference>
<dbReference type="PROSITE" id="PS00710">
    <property type="entry name" value="PGM_PMM"/>
    <property type="match status" value="1"/>
</dbReference>
<sequence>MSRKYFGTDGIRGRVGQFPITPDFMLKLGWAAGMAFRKQGHCRVLVGKDTRISGYMFESALEAGLSAAGADVMLLGPMPTPAIAYLTRTFHAEAGIVISASHNPHDDNGIKFFSGSGTKLPDEVELMIEELLDQPMTVVESGKLGKVSRINDAAGRYIEFCKSSVPSSTNFEGLKIVVDCAHGATYKVAPSVFRELGAEVTVLHASPDGLNINENCGSTHIESLQAAVLVGHADLGIAFDGDGDRVLMVDHTGAIVDGDELLYIIGRDLHDRNKLQGGVVGTLMSNLGLELAFKELDIPFVRAKVGDRYVMAELLEREWLLGGENSGHVVCCNHTTTGDAIIAALQVLMALKRKGETLAQARQGVRKCPQVLINVRFEAGKSDPLQNPLVKEASDKATEAMAGRGRVLLRKSGTEPLVRVMVEGDDENQVRGHAEALAKLVAEVCA</sequence>
<accession>Q1IF48</accession>
<keyword id="KW-0413">Isomerase</keyword>
<keyword id="KW-0460">Magnesium</keyword>
<keyword id="KW-0479">Metal-binding</keyword>
<keyword id="KW-0597">Phosphoprotein</keyword>
<proteinExistence type="inferred from homology"/>